<dbReference type="EC" id="2.5.1.78" evidence="1"/>
<dbReference type="EMBL" id="CP001390">
    <property type="protein sequence ID" value="ACM21028.1"/>
    <property type="molecule type" value="Genomic_DNA"/>
</dbReference>
<dbReference type="SMR" id="B9M1E6"/>
<dbReference type="STRING" id="316067.Geob_2678"/>
<dbReference type="KEGG" id="geo:Geob_2678"/>
<dbReference type="eggNOG" id="COG0054">
    <property type="taxonomic scope" value="Bacteria"/>
</dbReference>
<dbReference type="HOGENOM" id="CLU_089358_1_1_7"/>
<dbReference type="OrthoDB" id="9809709at2"/>
<dbReference type="UniPathway" id="UPA00275">
    <property type="reaction ID" value="UER00404"/>
</dbReference>
<dbReference type="Proteomes" id="UP000007721">
    <property type="component" value="Chromosome"/>
</dbReference>
<dbReference type="GO" id="GO:0005829">
    <property type="term" value="C:cytosol"/>
    <property type="evidence" value="ECO:0007669"/>
    <property type="project" value="TreeGrafter"/>
</dbReference>
<dbReference type="GO" id="GO:0009349">
    <property type="term" value="C:riboflavin synthase complex"/>
    <property type="evidence" value="ECO:0007669"/>
    <property type="project" value="InterPro"/>
</dbReference>
<dbReference type="GO" id="GO:0000906">
    <property type="term" value="F:6,7-dimethyl-8-ribityllumazine synthase activity"/>
    <property type="evidence" value="ECO:0007669"/>
    <property type="project" value="UniProtKB-UniRule"/>
</dbReference>
<dbReference type="GO" id="GO:0009231">
    <property type="term" value="P:riboflavin biosynthetic process"/>
    <property type="evidence" value="ECO:0007669"/>
    <property type="project" value="UniProtKB-UniRule"/>
</dbReference>
<dbReference type="CDD" id="cd09209">
    <property type="entry name" value="Lumazine_synthase-I"/>
    <property type="match status" value="1"/>
</dbReference>
<dbReference type="FunFam" id="3.40.50.960:FF:000001">
    <property type="entry name" value="6,7-dimethyl-8-ribityllumazine synthase"/>
    <property type="match status" value="1"/>
</dbReference>
<dbReference type="Gene3D" id="3.40.50.960">
    <property type="entry name" value="Lumazine/riboflavin synthase"/>
    <property type="match status" value="1"/>
</dbReference>
<dbReference type="HAMAP" id="MF_00178">
    <property type="entry name" value="Lumazine_synth"/>
    <property type="match status" value="1"/>
</dbReference>
<dbReference type="InterPro" id="IPR034964">
    <property type="entry name" value="LS"/>
</dbReference>
<dbReference type="InterPro" id="IPR002180">
    <property type="entry name" value="LS/RS"/>
</dbReference>
<dbReference type="InterPro" id="IPR036467">
    <property type="entry name" value="LS/RS_sf"/>
</dbReference>
<dbReference type="NCBIfam" id="TIGR00114">
    <property type="entry name" value="lumazine-synth"/>
    <property type="match status" value="1"/>
</dbReference>
<dbReference type="NCBIfam" id="NF000812">
    <property type="entry name" value="PRK00061.1-4"/>
    <property type="match status" value="1"/>
</dbReference>
<dbReference type="PANTHER" id="PTHR21058:SF0">
    <property type="entry name" value="6,7-DIMETHYL-8-RIBITYLLUMAZINE SYNTHASE"/>
    <property type="match status" value="1"/>
</dbReference>
<dbReference type="PANTHER" id="PTHR21058">
    <property type="entry name" value="6,7-DIMETHYL-8-RIBITYLLUMAZINE SYNTHASE DMRL SYNTHASE LUMAZINE SYNTHASE"/>
    <property type="match status" value="1"/>
</dbReference>
<dbReference type="Pfam" id="PF00885">
    <property type="entry name" value="DMRL_synthase"/>
    <property type="match status" value="1"/>
</dbReference>
<dbReference type="SUPFAM" id="SSF52121">
    <property type="entry name" value="Lumazine synthase"/>
    <property type="match status" value="1"/>
</dbReference>
<evidence type="ECO:0000255" key="1">
    <source>
        <dbReference type="HAMAP-Rule" id="MF_00178"/>
    </source>
</evidence>
<feature type="chain" id="PRO_1000195491" description="6,7-dimethyl-8-ribityllumazine synthase">
    <location>
        <begin position="1"/>
        <end position="155"/>
    </location>
</feature>
<feature type="active site" description="Proton donor" evidence="1">
    <location>
        <position position="89"/>
    </location>
</feature>
<feature type="binding site" evidence="1">
    <location>
        <position position="23"/>
    </location>
    <ligand>
        <name>5-amino-6-(D-ribitylamino)uracil</name>
        <dbReference type="ChEBI" id="CHEBI:15934"/>
    </ligand>
</feature>
<feature type="binding site" evidence="1">
    <location>
        <begin position="57"/>
        <end position="59"/>
    </location>
    <ligand>
        <name>5-amino-6-(D-ribitylamino)uracil</name>
        <dbReference type="ChEBI" id="CHEBI:15934"/>
    </ligand>
</feature>
<feature type="binding site" evidence="1">
    <location>
        <begin position="81"/>
        <end position="83"/>
    </location>
    <ligand>
        <name>5-amino-6-(D-ribitylamino)uracil</name>
        <dbReference type="ChEBI" id="CHEBI:15934"/>
    </ligand>
</feature>
<feature type="binding site" evidence="1">
    <location>
        <begin position="86"/>
        <end position="87"/>
    </location>
    <ligand>
        <name>(2S)-2-hydroxy-3-oxobutyl phosphate</name>
        <dbReference type="ChEBI" id="CHEBI:58830"/>
    </ligand>
</feature>
<feature type="binding site" evidence="1">
    <location>
        <position position="114"/>
    </location>
    <ligand>
        <name>5-amino-6-(D-ribitylamino)uracil</name>
        <dbReference type="ChEBI" id="CHEBI:15934"/>
    </ligand>
</feature>
<feature type="binding site" evidence="1">
    <location>
        <position position="128"/>
    </location>
    <ligand>
        <name>(2S)-2-hydroxy-3-oxobutyl phosphate</name>
        <dbReference type="ChEBI" id="CHEBI:58830"/>
    </ligand>
</feature>
<keyword id="KW-1185">Reference proteome</keyword>
<keyword id="KW-0686">Riboflavin biosynthesis</keyword>
<keyword id="KW-0808">Transferase</keyword>
<comment type="function">
    <text evidence="1">Catalyzes the formation of 6,7-dimethyl-8-ribityllumazine by condensation of 5-amino-6-(D-ribitylamino)uracil with 3,4-dihydroxy-2-butanone 4-phosphate. This is the penultimate step in the biosynthesis of riboflavin.</text>
</comment>
<comment type="catalytic activity">
    <reaction evidence="1">
        <text>(2S)-2-hydroxy-3-oxobutyl phosphate + 5-amino-6-(D-ribitylamino)uracil = 6,7-dimethyl-8-(1-D-ribityl)lumazine + phosphate + 2 H2O + H(+)</text>
        <dbReference type="Rhea" id="RHEA:26152"/>
        <dbReference type="ChEBI" id="CHEBI:15377"/>
        <dbReference type="ChEBI" id="CHEBI:15378"/>
        <dbReference type="ChEBI" id="CHEBI:15934"/>
        <dbReference type="ChEBI" id="CHEBI:43474"/>
        <dbReference type="ChEBI" id="CHEBI:58201"/>
        <dbReference type="ChEBI" id="CHEBI:58830"/>
        <dbReference type="EC" id="2.5.1.78"/>
    </reaction>
</comment>
<comment type="pathway">
    <text evidence="1">Cofactor biosynthesis; riboflavin biosynthesis; riboflavin from 2-hydroxy-3-oxobutyl phosphate and 5-amino-6-(D-ribitylamino)uracil: step 1/2.</text>
</comment>
<comment type="similarity">
    <text evidence="1">Belongs to the DMRL synthase family.</text>
</comment>
<protein>
    <recommendedName>
        <fullName evidence="1">6,7-dimethyl-8-ribityllumazine synthase</fullName>
        <shortName evidence="1">DMRL synthase</shortName>
        <shortName evidence="1">LS</shortName>
        <shortName evidence="1">Lumazine synthase</shortName>
        <ecNumber evidence="1">2.5.1.78</ecNumber>
    </recommendedName>
</protein>
<accession>B9M1E6</accession>
<proteinExistence type="inferred from homology"/>
<name>RISB_GEODF</name>
<organism>
    <name type="scientific">Geotalea daltonii (strain DSM 22248 / JCM 15807 / FRC-32)</name>
    <name type="common">Geobacter daltonii</name>
    <dbReference type="NCBI Taxonomy" id="316067"/>
    <lineage>
        <taxon>Bacteria</taxon>
        <taxon>Pseudomonadati</taxon>
        <taxon>Thermodesulfobacteriota</taxon>
        <taxon>Desulfuromonadia</taxon>
        <taxon>Geobacterales</taxon>
        <taxon>Geobacteraceae</taxon>
        <taxon>Geotalea</taxon>
    </lineage>
</organism>
<gene>
    <name evidence="1" type="primary">ribH</name>
    <name type="ordered locus">Geob_2678</name>
</gene>
<sequence>MPKFIEGKLDAKGLRFGIIVGRFNSFIGERLLEGALDALIRHGADDKNIEVARVPGAFEIPLATKKMAATGKYDAIICLGAVIRGATPHFDYVAAEVSKGVAHVSLDSGVPVAFGVLTTDTIEQAVERAGTKAGNKGFDSAMTAIETANLFKGIK</sequence>
<reference key="1">
    <citation type="submission" date="2009-01" db="EMBL/GenBank/DDBJ databases">
        <title>Complete sequence of Geobacter sp. FRC-32.</title>
        <authorList>
            <consortium name="US DOE Joint Genome Institute"/>
            <person name="Lucas S."/>
            <person name="Copeland A."/>
            <person name="Lapidus A."/>
            <person name="Glavina del Rio T."/>
            <person name="Dalin E."/>
            <person name="Tice H."/>
            <person name="Bruce D."/>
            <person name="Goodwin L."/>
            <person name="Pitluck S."/>
            <person name="Saunders E."/>
            <person name="Brettin T."/>
            <person name="Detter J.C."/>
            <person name="Han C."/>
            <person name="Larimer F."/>
            <person name="Land M."/>
            <person name="Hauser L."/>
            <person name="Kyrpides N."/>
            <person name="Ovchinnikova G."/>
            <person name="Kostka J."/>
            <person name="Richardson P."/>
        </authorList>
    </citation>
    <scope>NUCLEOTIDE SEQUENCE [LARGE SCALE GENOMIC DNA]</scope>
    <source>
        <strain>DSM 22248 / JCM 15807 / FRC-32</strain>
    </source>
</reference>